<proteinExistence type="inferred from homology"/>
<protein>
    <recommendedName>
        <fullName evidence="1">Ribosomal RNA large subunit methyltransferase H</fullName>
        <ecNumber evidence="1">2.1.1.177</ecNumber>
    </recommendedName>
    <alternativeName>
        <fullName evidence="1">23S rRNA (pseudouridine1915-N3)-methyltransferase</fullName>
    </alternativeName>
    <alternativeName>
        <fullName evidence="1">23S rRNA m3Psi1915 methyltransferase</fullName>
    </alternativeName>
    <alternativeName>
        <fullName evidence="1">rRNA (pseudouridine-N3-)-methyltransferase RlmH</fullName>
    </alternativeName>
</protein>
<name>RLMH_LAWIP</name>
<evidence type="ECO:0000255" key="1">
    <source>
        <dbReference type="HAMAP-Rule" id="MF_00658"/>
    </source>
</evidence>
<gene>
    <name evidence="1" type="primary">rlmH</name>
    <name type="ordered locus">LI0891</name>
</gene>
<organism>
    <name type="scientific">Lawsonia intracellularis (strain PHE/MN1-00)</name>
    <dbReference type="NCBI Taxonomy" id="363253"/>
    <lineage>
        <taxon>Bacteria</taxon>
        <taxon>Pseudomonadati</taxon>
        <taxon>Thermodesulfobacteriota</taxon>
        <taxon>Desulfovibrionia</taxon>
        <taxon>Desulfovibrionales</taxon>
        <taxon>Desulfovibrionaceae</taxon>
        <taxon>Lawsonia</taxon>
    </lineage>
</organism>
<accession>Q1MPY2</accession>
<sequence>MSSKSLRLIVVGRLRIPFWRAAAEHYYKRISCWRAIYETIIKDGNSSLSVSQRKAMEGKNILAALEPIDIPICLDEKGKSISSQEFANFLRNYFENTTKRPCFIIGGAFGLDSSVCNIANDCLSLGNITFPHELARVIFLEQVYRAETLLRNIPYHH</sequence>
<dbReference type="EC" id="2.1.1.177" evidence="1"/>
<dbReference type="EMBL" id="AM180252">
    <property type="protein sequence ID" value="CAJ54945.1"/>
    <property type="molecule type" value="Genomic_DNA"/>
</dbReference>
<dbReference type="RefSeq" id="WP_011526974.1">
    <property type="nucleotide sequence ID" value="NC_008011.1"/>
</dbReference>
<dbReference type="SMR" id="Q1MPY2"/>
<dbReference type="STRING" id="363253.LI0891"/>
<dbReference type="KEGG" id="lip:LI0891"/>
<dbReference type="eggNOG" id="COG1576">
    <property type="taxonomic scope" value="Bacteria"/>
</dbReference>
<dbReference type="HOGENOM" id="CLU_100552_1_0_7"/>
<dbReference type="OrthoDB" id="9806643at2"/>
<dbReference type="Proteomes" id="UP000002430">
    <property type="component" value="Chromosome"/>
</dbReference>
<dbReference type="GO" id="GO:0005737">
    <property type="term" value="C:cytoplasm"/>
    <property type="evidence" value="ECO:0007669"/>
    <property type="project" value="UniProtKB-SubCell"/>
</dbReference>
<dbReference type="GO" id="GO:0070038">
    <property type="term" value="F:rRNA (pseudouridine-N3-)-methyltransferase activity"/>
    <property type="evidence" value="ECO:0007669"/>
    <property type="project" value="UniProtKB-UniRule"/>
</dbReference>
<dbReference type="CDD" id="cd18081">
    <property type="entry name" value="RlmH-like"/>
    <property type="match status" value="1"/>
</dbReference>
<dbReference type="Gene3D" id="3.40.1280.10">
    <property type="match status" value="1"/>
</dbReference>
<dbReference type="HAMAP" id="MF_00658">
    <property type="entry name" value="23SrRNA_methyltr_H"/>
    <property type="match status" value="1"/>
</dbReference>
<dbReference type="InterPro" id="IPR029028">
    <property type="entry name" value="Alpha/beta_knot_MTases"/>
</dbReference>
<dbReference type="InterPro" id="IPR003742">
    <property type="entry name" value="RlmH-like"/>
</dbReference>
<dbReference type="InterPro" id="IPR029026">
    <property type="entry name" value="tRNA_m1G_MTases_N"/>
</dbReference>
<dbReference type="PANTHER" id="PTHR33603">
    <property type="entry name" value="METHYLTRANSFERASE"/>
    <property type="match status" value="1"/>
</dbReference>
<dbReference type="PANTHER" id="PTHR33603:SF1">
    <property type="entry name" value="RIBOSOMAL RNA LARGE SUBUNIT METHYLTRANSFERASE H"/>
    <property type="match status" value="1"/>
</dbReference>
<dbReference type="Pfam" id="PF02590">
    <property type="entry name" value="SPOUT_MTase"/>
    <property type="match status" value="1"/>
</dbReference>
<dbReference type="PIRSF" id="PIRSF004505">
    <property type="entry name" value="MT_bac"/>
    <property type="match status" value="1"/>
</dbReference>
<dbReference type="SUPFAM" id="SSF75217">
    <property type="entry name" value="alpha/beta knot"/>
    <property type="match status" value="1"/>
</dbReference>
<feature type="chain" id="PRO_0000260566" description="Ribosomal RNA large subunit methyltransferase H">
    <location>
        <begin position="1"/>
        <end position="157"/>
    </location>
</feature>
<feature type="binding site" evidence="1">
    <location>
        <position position="74"/>
    </location>
    <ligand>
        <name>S-adenosyl-L-methionine</name>
        <dbReference type="ChEBI" id="CHEBI:59789"/>
    </ligand>
</feature>
<feature type="binding site" evidence="1">
    <location>
        <position position="106"/>
    </location>
    <ligand>
        <name>S-adenosyl-L-methionine</name>
        <dbReference type="ChEBI" id="CHEBI:59789"/>
    </ligand>
</feature>
<feature type="binding site" evidence="1">
    <location>
        <begin position="125"/>
        <end position="130"/>
    </location>
    <ligand>
        <name>S-adenosyl-L-methionine</name>
        <dbReference type="ChEBI" id="CHEBI:59789"/>
    </ligand>
</feature>
<keyword id="KW-0963">Cytoplasm</keyword>
<keyword id="KW-0489">Methyltransferase</keyword>
<keyword id="KW-1185">Reference proteome</keyword>
<keyword id="KW-0698">rRNA processing</keyword>
<keyword id="KW-0949">S-adenosyl-L-methionine</keyword>
<keyword id="KW-0808">Transferase</keyword>
<reference key="1">
    <citation type="submission" date="2005-11" db="EMBL/GenBank/DDBJ databases">
        <title>The complete genome sequence of Lawsonia intracellularis: the causative agent of proliferative enteropathy.</title>
        <authorList>
            <person name="Kaur K."/>
            <person name="Zhang Q."/>
            <person name="Beckler D."/>
            <person name="Munir S."/>
            <person name="Li L."/>
            <person name="Kinsley K."/>
            <person name="Herron L."/>
            <person name="Peterson A."/>
            <person name="May B."/>
            <person name="Singh S."/>
            <person name="Gebhart C."/>
            <person name="Kapur V."/>
        </authorList>
    </citation>
    <scope>NUCLEOTIDE SEQUENCE [LARGE SCALE GENOMIC DNA]</scope>
    <source>
        <strain>PHE/MN1-00</strain>
    </source>
</reference>
<comment type="function">
    <text evidence="1">Specifically methylates the pseudouridine at position 1915 (m3Psi1915) in 23S rRNA.</text>
</comment>
<comment type="catalytic activity">
    <reaction evidence="1">
        <text>pseudouridine(1915) in 23S rRNA + S-adenosyl-L-methionine = N(3)-methylpseudouridine(1915) in 23S rRNA + S-adenosyl-L-homocysteine + H(+)</text>
        <dbReference type="Rhea" id="RHEA:42752"/>
        <dbReference type="Rhea" id="RHEA-COMP:10221"/>
        <dbReference type="Rhea" id="RHEA-COMP:10222"/>
        <dbReference type="ChEBI" id="CHEBI:15378"/>
        <dbReference type="ChEBI" id="CHEBI:57856"/>
        <dbReference type="ChEBI" id="CHEBI:59789"/>
        <dbReference type="ChEBI" id="CHEBI:65314"/>
        <dbReference type="ChEBI" id="CHEBI:74486"/>
        <dbReference type="EC" id="2.1.1.177"/>
    </reaction>
</comment>
<comment type="subunit">
    <text evidence="1">Homodimer.</text>
</comment>
<comment type="subcellular location">
    <subcellularLocation>
        <location evidence="1">Cytoplasm</location>
    </subcellularLocation>
</comment>
<comment type="similarity">
    <text evidence="1">Belongs to the RNA methyltransferase RlmH family.</text>
</comment>